<evidence type="ECO:0000250" key="1"/>
<evidence type="ECO:0000255" key="2"/>
<evidence type="ECO:0000305" key="3"/>
<comment type="function">
    <text>May play a role in plant defense. Probably has no oxalate oxidase activity even if the active site is conserved.</text>
</comment>
<comment type="subunit">
    <text evidence="1">Oligomer (believed to be a pentamer but probably hexamer).</text>
</comment>
<comment type="subcellular location">
    <subcellularLocation>
        <location evidence="1">Secreted</location>
        <location evidence="1">Extracellular space</location>
        <location evidence="1">Apoplast</location>
    </subcellularLocation>
</comment>
<comment type="similarity">
    <text evidence="3">Belongs to the germin family.</text>
</comment>
<reference key="1">
    <citation type="journal article" date="2000" name="Nature">
        <title>Sequence and analysis of chromosome 3 of the plant Arabidopsis thaliana.</title>
        <authorList>
            <person name="Salanoubat M."/>
            <person name="Lemcke K."/>
            <person name="Rieger M."/>
            <person name="Ansorge W."/>
            <person name="Unseld M."/>
            <person name="Fartmann B."/>
            <person name="Valle G."/>
            <person name="Bloecker H."/>
            <person name="Perez-Alonso M."/>
            <person name="Obermaier B."/>
            <person name="Delseny M."/>
            <person name="Boutry M."/>
            <person name="Grivell L.A."/>
            <person name="Mache R."/>
            <person name="Puigdomenech P."/>
            <person name="De Simone V."/>
            <person name="Choisne N."/>
            <person name="Artiguenave F."/>
            <person name="Robert C."/>
            <person name="Brottier P."/>
            <person name="Wincker P."/>
            <person name="Cattolico L."/>
            <person name="Weissenbach J."/>
            <person name="Saurin W."/>
            <person name="Quetier F."/>
            <person name="Schaefer M."/>
            <person name="Mueller-Auer S."/>
            <person name="Gabel C."/>
            <person name="Fuchs M."/>
            <person name="Benes V."/>
            <person name="Wurmbach E."/>
            <person name="Drzonek H."/>
            <person name="Erfle H."/>
            <person name="Jordan N."/>
            <person name="Bangert S."/>
            <person name="Wiedelmann R."/>
            <person name="Kranz H."/>
            <person name="Voss H."/>
            <person name="Holland R."/>
            <person name="Brandt P."/>
            <person name="Nyakatura G."/>
            <person name="Vezzi A."/>
            <person name="D'Angelo M."/>
            <person name="Pallavicini A."/>
            <person name="Toppo S."/>
            <person name="Simionati B."/>
            <person name="Conrad A."/>
            <person name="Hornischer K."/>
            <person name="Kauer G."/>
            <person name="Loehnert T.-H."/>
            <person name="Nordsiek G."/>
            <person name="Reichelt J."/>
            <person name="Scharfe M."/>
            <person name="Schoen O."/>
            <person name="Bargues M."/>
            <person name="Terol J."/>
            <person name="Climent J."/>
            <person name="Navarro P."/>
            <person name="Collado C."/>
            <person name="Perez-Perez A."/>
            <person name="Ottenwaelder B."/>
            <person name="Duchemin D."/>
            <person name="Cooke R."/>
            <person name="Laudie M."/>
            <person name="Berger-Llauro C."/>
            <person name="Purnelle B."/>
            <person name="Masuy D."/>
            <person name="de Haan M."/>
            <person name="Maarse A.C."/>
            <person name="Alcaraz J.-P."/>
            <person name="Cottet A."/>
            <person name="Casacuberta E."/>
            <person name="Monfort A."/>
            <person name="Argiriou A."/>
            <person name="Flores M."/>
            <person name="Liguori R."/>
            <person name="Vitale D."/>
            <person name="Mannhaupt G."/>
            <person name="Haase D."/>
            <person name="Schoof H."/>
            <person name="Rudd S."/>
            <person name="Zaccaria P."/>
            <person name="Mewes H.-W."/>
            <person name="Mayer K.F.X."/>
            <person name="Kaul S."/>
            <person name="Town C.D."/>
            <person name="Koo H.L."/>
            <person name="Tallon L.J."/>
            <person name="Jenkins J."/>
            <person name="Rooney T."/>
            <person name="Rizzo M."/>
            <person name="Walts A."/>
            <person name="Utterback T."/>
            <person name="Fujii C.Y."/>
            <person name="Shea T.P."/>
            <person name="Creasy T.H."/>
            <person name="Haas B."/>
            <person name="Maiti R."/>
            <person name="Wu D."/>
            <person name="Peterson J."/>
            <person name="Van Aken S."/>
            <person name="Pai G."/>
            <person name="Militscher J."/>
            <person name="Sellers P."/>
            <person name="Gill J.E."/>
            <person name="Feldblyum T.V."/>
            <person name="Preuss D."/>
            <person name="Lin X."/>
            <person name="Nierman W.C."/>
            <person name="Salzberg S.L."/>
            <person name="White O."/>
            <person name="Venter J.C."/>
            <person name="Fraser C.M."/>
            <person name="Kaneko T."/>
            <person name="Nakamura Y."/>
            <person name="Sato S."/>
            <person name="Kato T."/>
            <person name="Asamizu E."/>
            <person name="Sasamoto S."/>
            <person name="Kimura T."/>
            <person name="Idesawa K."/>
            <person name="Kawashima K."/>
            <person name="Kishida Y."/>
            <person name="Kiyokawa C."/>
            <person name="Kohara M."/>
            <person name="Matsumoto M."/>
            <person name="Matsuno A."/>
            <person name="Muraki A."/>
            <person name="Nakayama S."/>
            <person name="Nakazaki N."/>
            <person name="Shinpo S."/>
            <person name="Takeuchi C."/>
            <person name="Wada T."/>
            <person name="Watanabe A."/>
            <person name="Yamada M."/>
            <person name="Yasuda M."/>
            <person name="Tabata S."/>
        </authorList>
    </citation>
    <scope>NUCLEOTIDE SEQUENCE [LARGE SCALE GENOMIC DNA]</scope>
    <source>
        <strain>cv. Columbia</strain>
    </source>
</reference>
<reference key="2">
    <citation type="journal article" date="2017" name="Plant J.">
        <title>Araport11: a complete reannotation of the Arabidopsis thaliana reference genome.</title>
        <authorList>
            <person name="Cheng C.Y."/>
            <person name="Krishnakumar V."/>
            <person name="Chan A.P."/>
            <person name="Thibaud-Nissen F."/>
            <person name="Schobel S."/>
            <person name="Town C.D."/>
        </authorList>
    </citation>
    <scope>GENOME REANNOTATION</scope>
    <source>
        <strain>cv. Columbia</strain>
    </source>
</reference>
<reference key="3">
    <citation type="journal article" date="2004" name="Genome Res.">
        <title>Whole genome sequence comparisons and 'full-length' cDNA sequences: a combined approach to evaluate and improve Arabidopsis genome annotation.</title>
        <authorList>
            <person name="Castelli V."/>
            <person name="Aury J.-M."/>
            <person name="Jaillon O."/>
            <person name="Wincker P."/>
            <person name="Clepet C."/>
            <person name="Menard M."/>
            <person name="Cruaud C."/>
            <person name="Quetier F."/>
            <person name="Scarpelli C."/>
            <person name="Schaechter V."/>
            <person name="Temple G."/>
            <person name="Caboche M."/>
            <person name="Weissenbach J."/>
            <person name="Salanoubat M."/>
        </authorList>
    </citation>
    <scope>NUCLEOTIDE SEQUENCE [LARGE SCALE MRNA]</scope>
    <source>
        <strain>cv. Columbia</strain>
    </source>
</reference>
<feature type="signal peptide" evidence="2">
    <location>
        <begin position="1"/>
        <end position="24"/>
    </location>
</feature>
<feature type="chain" id="PRO_0000010805" description="Germin-like protein subfamily 1 member 5">
    <location>
        <begin position="25"/>
        <end position="222"/>
    </location>
</feature>
<feature type="domain" description="Cupin type-1" evidence="2">
    <location>
        <begin position="64"/>
        <end position="215"/>
    </location>
</feature>
<feature type="binding site" evidence="1">
    <location>
        <position position="112"/>
    </location>
    <ligand>
        <name>Mn(2+)</name>
        <dbReference type="ChEBI" id="CHEBI:29035"/>
    </ligand>
</feature>
<feature type="binding site" evidence="1">
    <location>
        <position position="114"/>
    </location>
    <ligand>
        <name>Mn(2+)</name>
        <dbReference type="ChEBI" id="CHEBI:29035"/>
    </ligand>
</feature>
<feature type="binding site" evidence="1">
    <location>
        <position position="119"/>
    </location>
    <ligand>
        <name>Mn(2+)</name>
        <dbReference type="ChEBI" id="CHEBI:29035"/>
    </ligand>
</feature>
<feature type="binding site" evidence="1">
    <location>
        <position position="163"/>
    </location>
    <ligand>
        <name>Mn(2+)</name>
        <dbReference type="ChEBI" id="CHEBI:29035"/>
    </ligand>
</feature>
<feature type="glycosylation site" description="N-linked (GlcNAc...) asparagine" evidence="2">
    <location>
        <position position="38"/>
    </location>
</feature>
<feature type="glycosylation site" description="N-linked (GlcNAc...) asparagine" evidence="2">
    <location>
        <position position="71"/>
    </location>
</feature>
<feature type="glycosylation site" description="N-linked (GlcNAc...) asparagine" evidence="2">
    <location>
        <position position="139"/>
    </location>
</feature>
<feature type="disulfide bond" evidence="1">
    <location>
        <begin position="34"/>
        <end position="50"/>
    </location>
</feature>
<feature type="sequence conflict" description="In Ref. 3; BX825378." evidence="3" ref="3">
    <original>A</original>
    <variation>T</variation>
    <location>
        <position position="99"/>
    </location>
</feature>
<feature type="sequence conflict" description="In Ref. 3; BX825378." evidence="3" ref="3">
    <original>I</original>
    <variation>F</variation>
    <location>
        <position position="120"/>
    </location>
</feature>
<proteinExistence type="evidence at transcript level"/>
<dbReference type="EMBL" id="AC016829">
    <property type="protein sequence ID" value="AAF26794.1"/>
    <property type="molecule type" value="Genomic_DNA"/>
</dbReference>
<dbReference type="EMBL" id="CP002686">
    <property type="protein sequence ID" value="AEE74051.1"/>
    <property type="molecule type" value="Genomic_DNA"/>
</dbReference>
<dbReference type="EMBL" id="BX825378">
    <property type="status" value="NOT_ANNOTATED_CDS"/>
    <property type="molecule type" value="mRNA"/>
</dbReference>
<dbReference type="RefSeq" id="NP_187069.1">
    <property type="nucleotide sequence ID" value="NM_111290.3"/>
</dbReference>
<dbReference type="SMR" id="Q9M8X5"/>
<dbReference type="FunCoup" id="Q9M8X5">
    <property type="interactions" value="27"/>
</dbReference>
<dbReference type="STRING" id="3702.Q9M8X5"/>
<dbReference type="GlyGen" id="Q9M8X5">
    <property type="glycosylation" value="3 sites"/>
</dbReference>
<dbReference type="PaxDb" id="3702-AT3G04190.1"/>
<dbReference type="ProteomicsDB" id="228968"/>
<dbReference type="EnsemblPlants" id="AT3G04190.1">
    <property type="protein sequence ID" value="AT3G04190.1"/>
    <property type="gene ID" value="AT3G04190"/>
</dbReference>
<dbReference type="GeneID" id="819574"/>
<dbReference type="Gramene" id="AT3G04190.1">
    <property type="protein sequence ID" value="AT3G04190.1"/>
    <property type="gene ID" value="AT3G04190"/>
</dbReference>
<dbReference type="KEGG" id="ath:AT3G04190"/>
<dbReference type="Araport" id="AT3G04190"/>
<dbReference type="TAIR" id="AT3G04190"/>
<dbReference type="HOGENOM" id="CLU_015790_0_0_1"/>
<dbReference type="InParanoid" id="Q9M8X5"/>
<dbReference type="OMA" id="TICCMAF"/>
<dbReference type="PhylomeDB" id="Q9M8X5"/>
<dbReference type="PRO" id="PR:Q9M8X5"/>
<dbReference type="Proteomes" id="UP000006548">
    <property type="component" value="Chromosome 3"/>
</dbReference>
<dbReference type="ExpressionAtlas" id="Q9M8X5">
    <property type="expression patterns" value="baseline and differential"/>
</dbReference>
<dbReference type="GO" id="GO:0048046">
    <property type="term" value="C:apoplast"/>
    <property type="evidence" value="ECO:0007669"/>
    <property type="project" value="UniProtKB-SubCell"/>
</dbReference>
<dbReference type="GO" id="GO:0030145">
    <property type="term" value="F:manganese ion binding"/>
    <property type="evidence" value="ECO:0007669"/>
    <property type="project" value="InterPro"/>
</dbReference>
<dbReference type="CDD" id="cd02241">
    <property type="entry name" value="cupin_OxOx"/>
    <property type="match status" value="1"/>
</dbReference>
<dbReference type="FunFam" id="2.60.120.10:FF:000005">
    <property type="entry name" value="Germin-like protein subfamily 1 member 8"/>
    <property type="match status" value="1"/>
</dbReference>
<dbReference type="Gene3D" id="2.60.120.10">
    <property type="entry name" value="Jelly Rolls"/>
    <property type="match status" value="1"/>
</dbReference>
<dbReference type="InterPro" id="IPR006045">
    <property type="entry name" value="Cupin_1"/>
</dbReference>
<dbReference type="InterPro" id="IPR001929">
    <property type="entry name" value="Germin"/>
</dbReference>
<dbReference type="InterPro" id="IPR019780">
    <property type="entry name" value="Germin_Mn-BS"/>
</dbReference>
<dbReference type="InterPro" id="IPR014710">
    <property type="entry name" value="RmlC-like_jellyroll"/>
</dbReference>
<dbReference type="InterPro" id="IPR011051">
    <property type="entry name" value="RmlC_Cupin_sf"/>
</dbReference>
<dbReference type="PANTHER" id="PTHR31238">
    <property type="entry name" value="GERMIN-LIKE PROTEIN SUBFAMILY 3 MEMBER 3"/>
    <property type="match status" value="1"/>
</dbReference>
<dbReference type="Pfam" id="PF00190">
    <property type="entry name" value="Cupin_1"/>
    <property type="match status" value="1"/>
</dbReference>
<dbReference type="PRINTS" id="PR00325">
    <property type="entry name" value="GERMIN"/>
</dbReference>
<dbReference type="SMART" id="SM00835">
    <property type="entry name" value="Cupin_1"/>
    <property type="match status" value="1"/>
</dbReference>
<dbReference type="SUPFAM" id="SSF51182">
    <property type="entry name" value="RmlC-like cupins"/>
    <property type="match status" value="1"/>
</dbReference>
<dbReference type="PROSITE" id="PS00725">
    <property type="entry name" value="GERMIN"/>
    <property type="match status" value="1"/>
</dbReference>
<accession>Q9M8X5</accession>
<protein>
    <recommendedName>
        <fullName>Germin-like protein subfamily 1 member 5</fullName>
    </recommendedName>
</protein>
<keyword id="KW-0052">Apoplast</keyword>
<keyword id="KW-1015">Disulfide bond</keyword>
<keyword id="KW-0325">Glycoprotein</keyword>
<keyword id="KW-0464">Manganese</keyword>
<keyword id="KW-0479">Metal-binding</keyword>
<keyword id="KW-1185">Reference proteome</keyword>
<keyword id="KW-0964">Secreted</keyword>
<keyword id="KW-0732">Signal</keyword>
<gene>
    <name type="ordered locus">At3g04190</name>
    <name type="ORF">T6K12.19</name>
</gene>
<organism>
    <name type="scientific">Arabidopsis thaliana</name>
    <name type="common">Mouse-ear cress</name>
    <dbReference type="NCBI Taxonomy" id="3702"/>
    <lineage>
        <taxon>Eukaryota</taxon>
        <taxon>Viridiplantae</taxon>
        <taxon>Streptophyta</taxon>
        <taxon>Embryophyta</taxon>
        <taxon>Tracheophyta</taxon>
        <taxon>Spermatophyta</taxon>
        <taxon>Magnoliopsida</taxon>
        <taxon>eudicotyledons</taxon>
        <taxon>Gunneridae</taxon>
        <taxon>Pentapetalae</taxon>
        <taxon>rosids</taxon>
        <taxon>malvids</taxon>
        <taxon>Brassicales</taxon>
        <taxon>Brassicaceae</taxon>
        <taxon>Camelineae</taxon>
        <taxon>Arabidopsis</taxon>
    </lineage>
</organism>
<sequence>MKGLLHFLLAKIILLALASSFVYCYEPSPLQDYCVATNETNGVYVNGKFCKDPKCVTANDFYTSGLNVPGNTSTGPGVKITVVDVKRMPGLNTLGVDIARIDFAPGGLYPPHTHPRGSEIFLVMKGKLFVGFVSSNEYNYTLFTKVLYPGDVFVFPKGLIQFHANIGKTNAVVIAATGSQNPGRIIIGNAVFGSKPLIDPKVLAKAFALDFNKVKYFQAVFS</sequence>
<name>GL15_ARATH</name>